<geneLocation type="chloroplast"/>
<sequence>MIFLTLEHILTHISFSVVSIVIIIHFLTLLVNEFVGLYDSSEKGMLTTFFCLTGLLITRWIYSGHLPISDLYESLIFLSWIFSIIHMVPYFKKHKNYLSTITAPSTFFTQGFATWGLLTDMHQSKILVPALQSQWLIMHVSMMVSGYAALLCGSLLSAALLVITFRKVIRIVGKNNNLLNDSFPVDEIQYMMEKKSIFKNTFFPSSRNYYRFQLIQQLDHWGFRILSIGFLFLTIGILSGAVWANEAWGSYWNWDPKETWAFITWTIFAIYFHTRTNKNLEGLNSAIVASIGFLIIWICYFGVNLLGIGLHSYGSFTLISN</sequence>
<evidence type="ECO:0000255" key="1">
    <source>
        <dbReference type="HAMAP-Rule" id="MF_01391"/>
    </source>
</evidence>
<protein>
    <recommendedName>
        <fullName evidence="1">Cytochrome c biogenesis protein CcsA</fullName>
    </recommendedName>
</protein>
<accession>Q14FA9</accession>
<gene>
    <name evidence="1" type="primary">ccsA</name>
</gene>
<organism>
    <name type="scientific">Populus alba</name>
    <name type="common">White poplar</name>
    <dbReference type="NCBI Taxonomy" id="43335"/>
    <lineage>
        <taxon>Eukaryota</taxon>
        <taxon>Viridiplantae</taxon>
        <taxon>Streptophyta</taxon>
        <taxon>Embryophyta</taxon>
        <taxon>Tracheophyta</taxon>
        <taxon>Spermatophyta</taxon>
        <taxon>Magnoliopsida</taxon>
        <taxon>eudicotyledons</taxon>
        <taxon>Gunneridae</taxon>
        <taxon>Pentapetalae</taxon>
        <taxon>rosids</taxon>
        <taxon>fabids</taxon>
        <taxon>Malpighiales</taxon>
        <taxon>Salicaceae</taxon>
        <taxon>Saliceae</taxon>
        <taxon>Populus</taxon>
    </lineage>
</organism>
<comment type="function">
    <text evidence="1">Required during biogenesis of c-type cytochromes (cytochrome c6 and cytochrome f) at the step of heme attachment.</text>
</comment>
<comment type="subunit">
    <text evidence="1">May interact with Ccs1.</text>
</comment>
<comment type="subcellular location">
    <subcellularLocation>
        <location evidence="1">Plastid</location>
        <location evidence="1">Chloroplast thylakoid membrane</location>
        <topology evidence="1">Multi-pass membrane protein</topology>
    </subcellularLocation>
</comment>
<comment type="similarity">
    <text evidence="1">Belongs to the CcmF/CycK/Ccl1/NrfE/CcsA family.</text>
</comment>
<name>CCSA_POPAL</name>
<proteinExistence type="inferred from homology"/>
<reference key="1">
    <citation type="submission" date="2005-03" db="EMBL/GenBank/DDBJ databases">
        <title>Complete structure of the chloroplast genome of Populus alba.</title>
        <authorList>
            <person name="Okumura S."/>
            <person name="Yamashita A."/>
            <person name="Kanamoto H."/>
            <person name="Hattori M."/>
            <person name="Takase H."/>
            <person name="Tomizawa K."/>
        </authorList>
    </citation>
    <scope>NUCLEOTIDE SEQUENCE [LARGE SCALE GENOMIC DNA]</scope>
</reference>
<dbReference type="EMBL" id="AP008956">
    <property type="protein sequence ID" value="BAE97253.1"/>
    <property type="molecule type" value="Genomic_DNA"/>
</dbReference>
<dbReference type="RefSeq" id="YP_665605.1">
    <property type="nucleotide sequence ID" value="NC_008235.1"/>
</dbReference>
<dbReference type="SMR" id="Q14FA9"/>
<dbReference type="GeneID" id="4178204"/>
<dbReference type="KEGG" id="palz:4178204"/>
<dbReference type="OrthoDB" id="30701at3646"/>
<dbReference type="GO" id="GO:0009535">
    <property type="term" value="C:chloroplast thylakoid membrane"/>
    <property type="evidence" value="ECO:0007669"/>
    <property type="project" value="UniProtKB-SubCell"/>
</dbReference>
<dbReference type="GO" id="GO:0005886">
    <property type="term" value="C:plasma membrane"/>
    <property type="evidence" value="ECO:0007669"/>
    <property type="project" value="TreeGrafter"/>
</dbReference>
<dbReference type="GO" id="GO:0020037">
    <property type="term" value="F:heme binding"/>
    <property type="evidence" value="ECO:0007669"/>
    <property type="project" value="InterPro"/>
</dbReference>
<dbReference type="GO" id="GO:0017004">
    <property type="term" value="P:cytochrome complex assembly"/>
    <property type="evidence" value="ECO:0007669"/>
    <property type="project" value="UniProtKB-UniRule"/>
</dbReference>
<dbReference type="HAMAP" id="MF_01391">
    <property type="entry name" value="CytC_CcsA"/>
    <property type="match status" value="1"/>
</dbReference>
<dbReference type="InterPro" id="IPR002541">
    <property type="entry name" value="Cyt_c_assembly"/>
</dbReference>
<dbReference type="InterPro" id="IPR017562">
    <property type="entry name" value="Cyt_c_biogenesis_CcsA"/>
</dbReference>
<dbReference type="InterPro" id="IPR045062">
    <property type="entry name" value="Cyt_c_biogenesis_CcsA/CcmC"/>
</dbReference>
<dbReference type="NCBIfam" id="TIGR03144">
    <property type="entry name" value="cytochr_II_ccsB"/>
    <property type="match status" value="1"/>
</dbReference>
<dbReference type="PANTHER" id="PTHR30071:SF1">
    <property type="entry name" value="CYTOCHROME B_B6 PROTEIN-RELATED"/>
    <property type="match status" value="1"/>
</dbReference>
<dbReference type="PANTHER" id="PTHR30071">
    <property type="entry name" value="HEME EXPORTER PROTEIN C"/>
    <property type="match status" value="1"/>
</dbReference>
<dbReference type="Pfam" id="PF01578">
    <property type="entry name" value="Cytochrom_C_asm"/>
    <property type="match status" value="1"/>
</dbReference>
<keyword id="KW-0150">Chloroplast</keyword>
<keyword id="KW-0201">Cytochrome c-type biogenesis</keyword>
<keyword id="KW-0472">Membrane</keyword>
<keyword id="KW-0934">Plastid</keyword>
<keyword id="KW-0793">Thylakoid</keyword>
<keyword id="KW-0812">Transmembrane</keyword>
<keyword id="KW-1133">Transmembrane helix</keyword>
<feature type="chain" id="PRO_0000353787" description="Cytochrome c biogenesis protein CcsA">
    <location>
        <begin position="1"/>
        <end position="321"/>
    </location>
</feature>
<feature type="transmembrane region" description="Helical" evidence="1">
    <location>
        <begin position="17"/>
        <end position="37"/>
    </location>
</feature>
<feature type="transmembrane region" description="Helical" evidence="1">
    <location>
        <begin position="48"/>
        <end position="68"/>
    </location>
</feature>
<feature type="transmembrane region" description="Helical" evidence="1">
    <location>
        <begin position="71"/>
        <end position="91"/>
    </location>
</feature>
<feature type="transmembrane region" description="Helical" evidence="1">
    <location>
        <begin position="98"/>
        <end position="118"/>
    </location>
</feature>
<feature type="transmembrane region" description="Helical" evidence="1">
    <location>
        <begin position="143"/>
        <end position="163"/>
    </location>
</feature>
<feature type="transmembrane region" description="Helical" evidence="1">
    <location>
        <begin position="225"/>
        <end position="245"/>
    </location>
</feature>
<feature type="transmembrane region" description="Helical" evidence="1">
    <location>
        <begin position="259"/>
        <end position="273"/>
    </location>
</feature>
<feature type="transmembrane region" description="Helical" evidence="1">
    <location>
        <begin position="286"/>
        <end position="306"/>
    </location>
</feature>